<proteinExistence type="evidence at protein level"/>
<accession>Q9V292</accession>
<accession>G8ZG17</accession>
<reference key="1">
    <citation type="journal article" date="2003" name="Mol. Microbiol.">
        <title>An integrated analysis of the genome of the hyperthermophilic archaeon Pyrococcus abyssi.</title>
        <authorList>
            <person name="Cohen G.N."/>
            <person name="Barbe V."/>
            <person name="Flament D."/>
            <person name="Galperin M."/>
            <person name="Heilig R."/>
            <person name="Lecompte O."/>
            <person name="Poch O."/>
            <person name="Prieur D."/>
            <person name="Querellou J."/>
            <person name="Ripp R."/>
            <person name="Thierry J.-C."/>
            <person name="Van der Oost J."/>
            <person name="Weissenbach J."/>
            <person name="Zivanovic Y."/>
            <person name="Forterre P."/>
        </authorList>
    </citation>
    <scope>NUCLEOTIDE SEQUENCE [LARGE SCALE GENOMIC DNA]</scope>
    <source>
        <strain>GE5 / Orsay</strain>
    </source>
</reference>
<reference key="2">
    <citation type="journal article" date="2012" name="Curr. Microbiol.">
        <title>Re-annotation of two hyperthermophilic archaea Pyrococcus abyssi GE5 and Pyrococcus furiosus DSM 3638.</title>
        <authorList>
            <person name="Gao J."/>
            <person name="Wang J."/>
        </authorList>
    </citation>
    <scope>GENOME REANNOTATION</scope>
    <source>
        <strain>GE5 / Orsay</strain>
    </source>
</reference>
<reference key="3">
    <citation type="journal article" date="2007" name="J. Mol. Biol.">
        <title>The heterodimeric primase from the euryarchaeon Pyrococcus abyssi: a multifunctional enzyme for initiation and repair?</title>
        <authorList>
            <person name="Le Breton M."/>
            <person name="Henneke G."/>
            <person name="Norais C."/>
            <person name="Flament D."/>
            <person name="Myllykallio H."/>
            <person name="Querellou J."/>
            <person name="Raffin J.P."/>
        </authorList>
    </citation>
    <scope>FUNCTION</scope>
    <scope>COFACTOR</scope>
    <scope>SUBUNIT</scope>
    <scope>BIOPHYSICOCHEMICAL PROPERTIES</scope>
    <source>
        <strain>GE5 / Orsay</strain>
    </source>
</reference>
<gene>
    <name evidence="2" type="primary">priS</name>
    <name type="synonym">priA</name>
    <name type="ordered locus">PYRAB01820</name>
    <name type="ORF">PAB2236</name>
</gene>
<protein>
    <recommendedName>
        <fullName evidence="2">DNA primase small subunit PriS</fullName>
        <ecNumber evidence="2">2.7.7.-</ecNumber>
    </recommendedName>
    <alternativeName>
        <fullName>DNA primase 41 kDa subunit</fullName>
        <shortName>Pabp41</shortName>
        <shortName>p41</shortName>
    </alternativeName>
</protein>
<keyword id="KW-0002">3D-structure</keyword>
<keyword id="KW-0235">DNA replication</keyword>
<keyword id="KW-0240">DNA-directed RNA polymerase</keyword>
<keyword id="KW-0460">Magnesium</keyword>
<keyword id="KW-0464">Manganese</keyword>
<keyword id="KW-0479">Metal-binding</keyword>
<keyword id="KW-0548">Nucleotidyltransferase</keyword>
<keyword id="KW-0639">Primosome</keyword>
<keyword id="KW-0804">Transcription</keyword>
<keyword id="KW-0808">Transferase</keyword>
<keyword id="KW-0862">Zinc</keyword>
<organism>
    <name type="scientific">Pyrococcus abyssi (strain GE5 / Orsay)</name>
    <dbReference type="NCBI Taxonomy" id="272844"/>
    <lineage>
        <taxon>Archaea</taxon>
        <taxon>Methanobacteriati</taxon>
        <taxon>Methanobacteriota</taxon>
        <taxon>Thermococci</taxon>
        <taxon>Thermococcales</taxon>
        <taxon>Thermococcaceae</taxon>
        <taxon>Pyrococcus</taxon>
    </lineage>
</organism>
<sequence length="345" mass="40508">MLLREVTKEERKEFYSNEWNAKQIPDFILQNLDKREFGFDHTGEGPSDRKNSYTDVRDLEDYIKATAPYAVYSSVAFYEKPQEMEGWLGAELVFDIDAKDLPLRRCNHEPGKVCPICLNDAKEIARDTLIVLKEELGFEDVHVVYSGRGYHIRVMDGWALSLDSKSRERILSFISASEIEDHSEFRKMLLERRGWFVLNHGYPRVFRLRFGYFILRVKVEHLINFGIRKNIAKRILDNKETIYEEFVRKGILAAFPDGVGIESLAKLFALSTRFSKAYFDGRVTVDLKRILRLPSTLHSKVGLIAKYIGNNERDVMRFNPFKHAVPKFRRKEVKEEYKRFLEENF</sequence>
<name>PRIS_PYRAB</name>
<dbReference type="EC" id="2.7.7.-" evidence="2"/>
<dbReference type="EMBL" id="AJ248283">
    <property type="protein sequence ID" value="CAB49106.1"/>
    <property type="molecule type" value="Genomic_DNA"/>
</dbReference>
<dbReference type="EMBL" id="HE613800">
    <property type="protein sequence ID" value="CCE69558.1"/>
    <property type="molecule type" value="Genomic_DNA"/>
</dbReference>
<dbReference type="PIR" id="C75207">
    <property type="entry name" value="C75207"/>
</dbReference>
<dbReference type="RefSeq" id="WP_010867306.1">
    <property type="nucleotide sequence ID" value="NC_000868.1"/>
</dbReference>
<dbReference type="PDB" id="9F26">
    <property type="method" value="X-ray"/>
    <property type="resolution" value="3.50 A"/>
    <property type="chains" value="A=1-345"/>
</dbReference>
<dbReference type="PDB" id="9F28">
    <property type="method" value="X-ray"/>
    <property type="resolution" value="1.85 A"/>
    <property type="chains" value="A=1-345"/>
</dbReference>
<dbReference type="PDBsum" id="9F26"/>
<dbReference type="PDBsum" id="9F28"/>
<dbReference type="SMR" id="Q9V292"/>
<dbReference type="STRING" id="272844.PAB2236"/>
<dbReference type="KEGG" id="pab:PAB2236"/>
<dbReference type="PATRIC" id="fig|272844.11.peg.196"/>
<dbReference type="eggNOG" id="arCOG04110">
    <property type="taxonomic scope" value="Archaea"/>
</dbReference>
<dbReference type="HOGENOM" id="CLU_056123_1_0_2"/>
<dbReference type="OrthoDB" id="31125at2157"/>
<dbReference type="PhylomeDB" id="Q9V292"/>
<dbReference type="BRENDA" id="2.7.7.102">
    <property type="organism ID" value="5242"/>
</dbReference>
<dbReference type="BRENDA" id="2.7.7.B16">
    <property type="organism ID" value="5242"/>
</dbReference>
<dbReference type="SABIO-RK" id="Q9V292"/>
<dbReference type="Proteomes" id="UP000000810">
    <property type="component" value="Chromosome"/>
</dbReference>
<dbReference type="Proteomes" id="UP000009139">
    <property type="component" value="Chromosome"/>
</dbReference>
<dbReference type="GO" id="GO:0000428">
    <property type="term" value="C:DNA-directed RNA polymerase complex"/>
    <property type="evidence" value="ECO:0007669"/>
    <property type="project" value="UniProtKB-KW"/>
</dbReference>
<dbReference type="GO" id="GO:1990077">
    <property type="term" value="C:primosome complex"/>
    <property type="evidence" value="ECO:0007669"/>
    <property type="project" value="UniProtKB-KW"/>
</dbReference>
<dbReference type="GO" id="GO:0003899">
    <property type="term" value="F:DNA-directed RNA polymerase activity"/>
    <property type="evidence" value="ECO:0007669"/>
    <property type="project" value="InterPro"/>
</dbReference>
<dbReference type="GO" id="GO:0046872">
    <property type="term" value="F:metal ion binding"/>
    <property type="evidence" value="ECO:0007669"/>
    <property type="project" value="UniProtKB-KW"/>
</dbReference>
<dbReference type="GO" id="GO:0006269">
    <property type="term" value="P:DNA replication, synthesis of primer"/>
    <property type="evidence" value="ECO:0007669"/>
    <property type="project" value="UniProtKB-UniRule"/>
</dbReference>
<dbReference type="CDD" id="cd04860">
    <property type="entry name" value="AE_Prim_S"/>
    <property type="match status" value="1"/>
</dbReference>
<dbReference type="Gene3D" id="1.10.8.160">
    <property type="entry name" value="DNA primase S, domain 2"/>
    <property type="match status" value="1"/>
</dbReference>
<dbReference type="Gene3D" id="3.90.920.10">
    <property type="entry name" value="DNA primase, PRIM domain"/>
    <property type="match status" value="1"/>
</dbReference>
<dbReference type="HAMAP" id="MF_00700">
    <property type="entry name" value="DNA_primase_sml_arc"/>
    <property type="match status" value="1"/>
</dbReference>
<dbReference type="InterPro" id="IPR002755">
    <property type="entry name" value="DNA_primase_S"/>
</dbReference>
<dbReference type="InterPro" id="IPR014052">
    <property type="entry name" value="DNA_primase_ssu_euk/arc"/>
</dbReference>
<dbReference type="InterPro" id="IPR023639">
    <property type="entry name" value="DNA_primase_ssu_PriS"/>
</dbReference>
<dbReference type="NCBIfam" id="TIGR00335">
    <property type="entry name" value="primase_sml"/>
    <property type="match status" value="1"/>
</dbReference>
<dbReference type="PANTHER" id="PTHR10536">
    <property type="entry name" value="DNA PRIMASE SMALL SUBUNIT"/>
    <property type="match status" value="1"/>
</dbReference>
<dbReference type="Pfam" id="PF01896">
    <property type="entry name" value="DNA_primase_S"/>
    <property type="match status" value="1"/>
</dbReference>
<dbReference type="SUPFAM" id="SSF56747">
    <property type="entry name" value="Prim-pol domain"/>
    <property type="match status" value="1"/>
</dbReference>
<comment type="function">
    <text evidence="3">Catalytic subunit of DNA primase, an RNA polymerase that catalyzes the synthesis of short RNA molecules used as primers for DNA polymerase during DNA replication. The small subunit contains the primase catalytic core and has DNA synthesis activity on its own, synthesizing DNA strands up to 3 kB. Binding to the large subunit stabilizes and modulates the activity, increasing the rate of DNA synthesis while decreasing the length of the DNA fragments, and conferring RNA synthesis capability for RNA fragments up to 150 bases. The DNA polymerase activity may enable DNA primase to also catalyze primer extension after primer synthesis. May also play a role in DNA repair. Displays gap-filling and strand-displacement activities.</text>
</comment>
<comment type="cofactor">
    <cofactor evidence="2 3">
        <name>Mg(2+)</name>
        <dbReference type="ChEBI" id="CHEBI:18420"/>
    </cofactor>
    <cofactor evidence="2 3">
        <name>Mn(2+)</name>
        <dbReference type="ChEBI" id="CHEBI:29035"/>
    </cofactor>
</comment>
<comment type="biophysicochemical properties">
    <kinetics>
        <KM evidence="3">60.5 mM for dNTPs (in the presence of 5 mM Mg(2+))</KM>
        <KM evidence="3">5 mM for dNTPs (in the presence of 10 mM Mg(2+))</KM>
        <KM evidence="3">198 mM for dNTPs (in the presence of 10 mM Mg(2+) and 5 mM Mn(2+))</KM>
        <KM evidence="3">27.5 mM for NTPs (in the presence of 10 mM Mg(2+))</KM>
        <Vmax evidence="3">1.12 pmol/min/mg enzyme for dNTPs (in the presence of 5 mM Mg(2+))</Vmax>
        <Vmax evidence="3">0.7 pmol/min/mg enzyme for dNTPs (in the presence of 10 mM Mg(2+))</Vmax>
        <Vmax evidence="3">5.9 pmol/min/mg enzyme for dNTPs (in the presence of 10 mM Mg(2+) and 5 mM Mn(2+))</Vmax>
        <Vmax evidence="3">0.88 pmol/min/mg enzyme for NTPs (in the presence of 5 mM Mg(2+))</Vmax>
    </kinetics>
</comment>
<comment type="subunit">
    <text evidence="2 3">Heterodimer of a small subunit (PriS) and a large subunit (PriL).</text>
</comment>
<comment type="similarity">
    <text evidence="2">Belongs to the eukaryotic-type primase small subunit family.</text>
</comment>
<evidence type="ECO:0000250" key="1"/>
<evidence type="ECO:0000255" key="2">
    <source>
        <dbReference type="HAMAP-Rule" id="MF_00700"/>
    </source>
</evidence>
<evidence type="ECO:0000269" key="3">
    <source>
    </source>
</evidence>
<evidence type="ECO:0007829" key="4">
    <source>
        <dbReference type="PDB" id="9F28"/>
    </source>
</evidence>
<feature type="chain" id="PRO_0000046748" description="DNA primase small subunit PriS">
    <location>
        <begin position="1"/>
        <end position="345"/>
    </location>
</feature>
<feature type="short sequence motif" description="Zinc knuckle motif" evidence="1">
    <location>
        <begin position="106"/>
        <end position="117"/>
    </location>
</feature>
<feature type="active site" evidence="2">
    <location>
        <position position="95"/>
    </location>
</feature>
<feature type="active site" evidence="2">
    <location>
        <position position="97"/>
    </location>
</feature>
<feature type="active site" evidence="2">
    <location>
        <position position="280"/>
    </location>
</feature>
<feature type="binding site" evidence="1">
    <location>
        <position position="106"/>
    </location>
    <ligand>
        <name>Zn(2+)</name>
        <dbReference type="ChEBI" id="CHEBI:29105"/>
    </ligand>
</feature>
<feature type="binding site" evidence="1">
    <location>
        <position position="108"/>
    </location>
    <ligand>
        <name>Zn(2+)</name>
        <dbReference type="ChEBI" id="CHEBI:29105"/>
    </ligand>
</feature>
<feature type="binding site" evidence="1">
    <location>
        <position position="114"/>
    </location>
    <ligand>
        <name>Zn(2+)</name>
        <dbReference type="ChEBI" id="CHEBI:29105"/>
    </ligand>
</feature>
<feature type="binding site" evidence="1">
    <location>
        <position position="117"/>
    </location>
    <ligand>
        <name>Zn(2+)</name>
        <dbReference type="ChEBI" id="CHEBI:29105"/>
    </ligand>
</feature>
<feature type="helix" evidence="4">
    <location>
        <begin position="8"/>
        <end position="17"/>
    </location>
</feature>
<feature type="helix" evidence="4">
    <location>
        <begin position="21"/>
        <end position="23"/>
    </location>
</feature>
<feature type="helix" evidence="4">
    <location>
        <begin position="26"/>
        <end position="29"/>
    </location>
</feature>
<feature type="helix" evidence="4">
    <location>
        <begin position="30"/>
        <end position="34"/>
    </location>
</feature>
<feature type="strand" evidence="4">
    <location>
        <begin position="37"/>
        <end position="44"/>
    </location>
</feature>
<feature type="strand" evidence="4">
    <location>
        <begin position="48"/>
        <end position="51"/>
    </location>
</feature>
<feature type="helix" evidence="4">
    <location>
        <begin position="56"/>
        <end position="66"/>
    </location>
</feature>
<feature type="strand" evidence="4">
    <location>
        <begin position="69"/>
        <end position="80"/>
    </location>
</feature>
<feature type="helix" evidence="4">
    <location>
        <begin position="81"/>
        <end position="83"/>
    </location>
</feature>
<feature type="strand" evidence="4">
    <location>
        <begin position="85"/>
        <end position="90"/>
    </location>
</feature>
<feature type="strand" evidence="4">
    <location>
        <begin position="92"/>
        <end position="97"/>
    </location>
</feature>
<feature type="helix" evidence="4">
    <location>
        <begin position="98"/>
        <end position="100"/>
    </location>
</feature>
<feature type="helix" evidence="4">
    <location>
        <begin position="115"/>
        <end position="134"/>
    </location>
</feature>
<feature type="strand" evidence="4">
    <location>
        <begin position="140"/>
        <end position="145"/>
    </location>
</feature>
<feature type="strand" evidence="4">
    <location>
        <begin position="147"/>
        <end position="154"/>
    </location>
</feature>
<feature type="helix" evidence="4">
    <location>
        <begin position="157"/>
        <end position="160"/>
    </location>
</feature>
<feature type="helix" evidence="4">
    <location>
        <begin position="164"/>
        <end position="174"/>
    </location>
</feature>
<feature type="helix" evidence="4">
    <location>
        <begin position="182"/>
        <end position="191"/>
    </location>
</feature>
<feature type="helix" evidence="4">
    <location>
        <begin position="193"/>
        <end position="197"/>
    </location>
</feature>
<feature type="strand" evidence="4">
    <location>
        <begin position="199"/>
        <end position="201"/>
    </location>
</feature>
<feature type="helix" evidence="4">
    <location>
        <begin position="202"/>
        <end position="214"/>
    </location>
</feature>
<feature type="helix" evidence="4">
    <location>
        <begin position="219"/>
        <end position="225"/>
    </location>
</feature>
<feature type="helix" evidence="4">
    <location>
        <begin position="229"/>
        <end position="237"/>
    </location>
</feature>
<feature type="helix" evidence="4">
    <location>
        <begin position="239"/>
        <end position="246"/>
    </location>
</feature>
<feature type="helix" evidence="4">
    <location>
        <begin position="261"/>
        <end position="276"/>
    </location>
</feature>
<feature type="helix" evidence="4">
    <location>
        <begin position="281"/>
        <end position="285"/>
    </location>
</feature>
<feature type="strand" evidence="4">
    <location>
        <begin position="290"/>
        <end position="292"/>
    </location>
</feature>
<feature type="strand" evidence="4">
    <location>
        <begin position="296"/>
        <end position="298"/>
    </location>
</feature>
<feature type="turn" evidence="4">
    <location>
        <begin position="299"/>
        <end position="302"/>
    </location>
</feature>
<feature type="strand" evidence="4">
    <location>
        <begin position="307"/>
        <end position="310"/>
    </location>
</feature>
<feature type="helix" evidence="4">
    <location>
        <begin position="312"/>
        <end position="317"/>
    </location>
</feature>
<feature type="helix" evidence="4">
    <location>
        <begin position="320"/>
        <end position="323"/>
    </location>
</feature>
<feature type="helix" evidence="4">
    <location>
        <begin position="327"/>
        <end position="329"/>
    </location>
</feature>
<feature type="helix" evidence="4">
    <location>
        <begin position="330"/>
        <end position="343"/>
    </location>
</feature>